<sequence length="141" mass="15669">MAIGRYGTLVFYILAGLAFVWSLEYFKHYTKNNYERFHCTAVVEPVQGTATVEKLSAVGGPPCDKRAELKLITQKLTQHFDPNKQPALFCIVENTSVESVHYPVSRTNKGPAGYIAYAGYEADRAAVHKYCEAHGAAVLHM</sequence>
<reference key="1">
    <citation type="journal article" date="2004" name="Science">
        <title>The Ashbya gossypii genome as a tool for mapping the ancient Saccharomyces cerevisiae genome.</title>
        <authorList>
            <person name="Dietrich F.S."/>
            <person name="Voegeli S."/>
            <person name="Brachat S."/>
            <person name="Lerch A."/>
            <person name="Gates K."/>
            <person name="Steiner S."/>
            <person name="Mohr C."/>
            <person name="Poehlmann R."/>
            <person name="Luedi P."/>
            <person name="Choi S."/>
            <person name="Wing R.A."/>
            <person name="Flavier A."/>
            <person name="Gaffney T.D."/>
            <person name="Philippsen P."/>
        </authorList>
    </citation>
    <scope>NUCLEOTIDE SEQUENCE [LARGE SCALE GENOMIC DNA]</scope>
    <source>
        <strain>ATCC 10895 / CBS 109.51 / FGSC 9923 / NRRL Y-1056</strain>
    </source>
</reference>
<reference key="2">
    <citation type="journal article" date="2013" name="G3 (Bethesda)">
        <title>Genomes of Ashbya fungi isolated from insects reveal four mating-type loci, numerous translocations, lack of transposons, and distinct gene duplications.</title>
        <authorList>
            <person name="Dietrich F.S."/>
            <person name="Voegeli S."/>
            <person name="Kuo S."/>
            <person name="Philippsen P."/>
        </authorList>
    </citation>
    <scope>GENOME REANNOTATION</scope>
    <source>
        <strain>ATCC 10895 / CBS 109.51 / FGSC 9923 / NRRL Y-1056</strain>
    </source>
</reference>
<dbReference type="EMBL" id="AE016820">
    <property type="protein sequence ID" value="AAS54162.1"/>
    <property type="molecule type" value="Genomic_DNA"/>
</dbReference>
<dbReference type="RefSeq" id="NP_986338.1">
    <property type="nucleotide sequence ID" value="NM_211400.1"/>
</dbReference>
<dbReference type="SMR" id="Q751M6"/>
<dbReference type="FunCoup" id="Q751M6">
    <property type="interactions" value="27"/>
</dbReference>
<dbReference type="GlyCosmos" id="Q751M6">
    <property type="glycosylation" value="1 site, No reported glycans"/>
</dbReference>
<dbReference type="EnsemblFungi" id="AAS54162">
    <property type="protein sequence ID" value="AAS54162"/>
    <property type="gene ID" value="AGOS_AGL329C"/>
</dbReference>
<dbReference type="GeneID" id="4622631"/>
<dbReference type="KEGG" id="ago:AGOS_AGL329C"/>
<dbReference type="eggNOG" id="ENOG502S1YW">
    <property type="taxonomic scope" value="Eukaryota"/>
</dbReference>
<dbReference type="HOGENOM" id="CLU_1759093_0_0_1"/>
<dbReference type="InParanoid" id="Q751M6"/>
<dbReference type="OMA" id="STRINYE"/>
<dbReference type="OrthoDB" id="3979149at2759"/>
<dbReference type="Proteomes" id="UP000000591">
    <property type="component" value="Chromosome VII"/>
</dbReference>
<dbReference type="GO" id="GO:0061576">
    <property type="term" value="C:acyl-CoA ceramide synthase complex"/>
    <property type="evidence" value="ECO:0007669"/>
    <property type="project" value="EnsemblFungi"/>
</dbReference>
<dbReference type="GO" id="GO:0005789">
    <property type="term" value="C:endoplasmic reticulum membrane"/>
    <property type="evidence" value="ECO:0007669"/>
    <property type="project" value="UniProtKB-SubCell"/>
</dbReference>
<dbReference type="GO" id="GO:0050291">
    <property type="term" value="F:sphingosine N-acyltransferase activity"/>
    <property type="evidence" value="ECO:0007669"/>
    <property type="project" value="EnsemblFungi"/>
</dbReference>
<dbReference type="GO" id="GO:0046513">
    <property type="term" value="P:ceramide biosynthetic process"/>
    <property type="evidence" value="ECO:0007669"/>
    <property type="project" value="EnsemblFungi"/>
</dbReference>
<protein>
    <recommendedName>
        <fullName>Ceramide synthase subunit LIP1</fullName>
    </recommendedName>
</protein>
<evidence type="ECO:0000250" key="1"/>
<evidence type="ECO:0000255" key="2"/>
<evidence type="ECO:0000305" key="3"/>
<keyword id="KW-0256">Endoplasmic reticulum</keyword>
<keyword id="KW-0325">Glycoprotein</keyword>
<keyword id="KW-0444">Lipid biosynthesis</keyword>
<keyword id="KW-0443">Lipid metabolism</keyword>
<keyword id="KW-0472">Membrane</keyword>
<keyword id="KW-1185">Reference proteome</keyword>
<keyword id="KW-0735">Signal-anchor</keyword>
<keyword id="KW-0812">Transmembrane</keyword>
<keyword id="KW-1133">Transmembrane helix</keyword>
<comment type="function">
    <text evidence="1">Component of the ceramide synthase complex required for synthesis of ceramides.</text>
</comment>
<comment type="subunit">
    <text evidence="1">Component of the ceramide synthase complex.</text>
</comment>
<comment type="subcellular location">
    <subcellularLocation>
        <location evidence="1">Endoplasmic reticulum membrane</location>
        <topology evidence="1">Single-pass type II membrane protein</topology>
    </subcellularLocation>
</comment>
<comment type="similarity">
    <text evidence="3">Belongs to the LIP1 family.</text>
</comment>
<name>LIP1_EREGS</name>
<organism>
    <name type="scientific">Eremothecium gossypii (strain ATCC 10895 / CBS 109.51 / FGSC 9923 / NRRL Y-1056)</name>
    <name type="common">Yeast</name>
    <name type="synonym">Ashbya gossypii</name>
    <dbReference type="NCBI Taxonomy" id="284811"/>
    <lineage>
        <taxon>Eukaryota</taxon>
        <taxon>Fungi</taxon>
        <taxon>Dikarya</taxon>
        <taxon>Ascomycota</taxon>
        <taxon>Saccharomycotina</taxon>
        <taxon>Saccharomycetes</taxon>
        <taxon>Saccharomycetales</taxon>
        <taxon>Saccharomycetaceae</taxon>
        <taxon>Eremothecium</taxon>
    </lineage>
</organism>
<feature type="chain" id="PRO_0000308778" description="Ceramide synthase subunit LIP1">
    <location>
        <begin position="1"/>
        <end position="141"/>
    </location>
</feature>
<feature type="topological domain" description="Cytoplasmic" evidence="1">
    <location>
        <begin position="1"/>
        <end position="3"/>
    </location>
</feature>
<feature type="transmembrane region" description="Helical; Signal-anchor for type II membrane protein" evidence="2">
    <location>
        <begin position="4"/>
        <end position="26"/>
    </location>
</feature>
<feature type="topological domain" description="Lumenal" evidence="1">
    <location>
        <begin position="27"/>
        <end position="141"/>
    </location>
</feature>
<feature type="glycosylation site" description="N-linked (GlcNAc...) asparagine" evidence="2">
    <location>
        <position position="94"/>
    </location>
</feature>
<gene>
    <name type="primary">LIP1</name>
    <name type="ordered locus">AGL329C</name>
</gene>
<accession>Q751M6</accession>
<proteinExistence type="inferred from homology"/>